<accession>O36979</accession>
<dbReference type="EC" id="3.4.21.-"/>
<dbReference type="EC" id="3.4.22.45" evidence="2"/>
<dbReference type="EC" id="3.6.4.-"/>
<dbReference type="EC" id="3.4.22.44"/>
<dbReference type="EC" id="2.7.7.48"/>
<dbReference type="EMBL" id="AF014811">
    <property type="protein sequence ID" value="AAB72004.2"/>
    <property type="molecule type" value="Genomic_RNA"/>
</dbReference>
<dbReference type="MEROPS" id="C06.001"/>
<dbReference type="Proteomes" id="UP000008612">
    <property type="component" value="Genome"/>
</dbReference>
<dbReference type="GO" id="GO:0019029">
    <property type="term" value="C:helical viral capsid"/>
    <property type="evidence" value="ECO:0007669"/>
    <property type="project" value="UniProtKB-KW"/>
</dbReference>
<dbReference type="GO" id="GO:0044161">
    <property type="term" value="C:host cell cytoplasmic vesicle"/>
    <property type="evidence" value="ECO:0007669"/>
    <property type="project" value="UniProtKB-SubCell"/>
</dbReference>
<dbReference type="GO" id="GO:0042025">
    <property type="term" value="C:host cell nucleus"/>
    <property type="evidence" value="ECO:0007669"/>
    <property type="project" value="UniProtKB-SubCell"/>
</dbReference>
<dbReference type="GO" id="GO:0005524">
    <property type="term" value="F:ATP binding"/>
    <property type="evidence" value="ECO:0007669"/>
    <property type="project" value="UniProtKB-KW"/>
</dbReference>
<dbReference type="GO" id="GO:0004197">
    <property type="term" value="F:cysteine-type endopeptidase activity"/>
    <property type="evidence" value="ECO:0007669"/>
    <property type="project" value="InterPro"/>
</dbReference>
<dbReference type="GO" id="GO:0004386">
    <property type="term" value="F:helicase activity"/>
    <property type="evidence" value="ECO:0007669"/>
    <property type="project" value="UniProtKB-KW"/>
</dbReference>
<dbReference type="GO" id="GO:0016818">
    <property type="term" value="F:hydrolase activity, acting on acid anhydrides, in phosphorus-containing anhydrides"/>
    <property type="evidence" value="ECO:0007669"/>
    <property type="project" value="InterPro"/>
</dbReference>
<dbReference type="GO" id="GO:0003723">
    <property type="term" value="F:RNA binding"/>
    <property type="evidence" value="ECO:0007669"/>
    <property type="project" value="InterPro"/>
</dbReference>
<dbReference type="GO" id="GO:0003968">
    <property type="term" value="F:RNA-directed RNA polymerase activity"/>
    <property type="evidence" value="ECO:0007669"/>
    <property type="project" value="UniProtKB-KW"/>
</dbReference>
<dbReference type="GO" id="GO:0005198">
    <property type="term" value="F:structural molecule activity"/>
    <property type="evidence" value="ECO:0007669"/>
    <property type="project" value="InterPro"/>
</dbReference>
<dbReference type="GO" id="GO:0006351">
    <property type="term" value="P:DNA-templated transcription"/>
    <property type="evidence" value="ECO:0007669"/>
    <property type="project" value="InterPro"/>
</dbReference>
<dbReference type="GO" id="GO:0006508">
    <property type="term" value="P:proteolysis"/>
    <property type="evidence" value="ECO:0007669"/>
    <property type="project" value="UniProtKB-KW"/>
</dbReference>
<dbReference type="GO" id="GO:0052170">
    <property type="term" value="P:symbiont-mediated suppression of host innate immune response"/>
    <property type="evidence" value="ECO:0007669"/>
    <property type="project" value="UniProtKB-KW"/>
</dbReference>
<dbReference type="GO" id="GO:0039694">
    <property type="term" value="P:viral RNA genome replication"/>
    <property type="evidence" value="ECO:0007669"/>
    <property type="project" value="InterPro"/>
</dbReference>
<dbReference type="GO" id="GO:0075523">
    <property type="term" value="P:viral translational frameshifting"/>
    <property type="evidence" value="ECO:0007669"/>
    <property type="project" value="UniProtKB-KW"/>
</dbReference>
<dbReference type="CDD" id="cd23175">
    <property type="entry name" value="ps-ssRNAv_Potyviridae_RdRp"/>
    <property type="match status" value="1"/>
</dbReference>
<dbReference type="Gene3D" id="3.30.70.270">
    <property type="match status" value="1"/>
</dbReference>
<dbReference type="Gene3D" id="3.90.70.150">
    <property type="entry name" value="Helper component proteinase"/>
    <property type="match status" value="1"/>
</dbReference>
<dbReference type="Gene3D" id="3.40.50.300">
    <property type="entry name" value="P-loop containing nucleotide triphosphate hydrolases"/>
    <property type="match status" value="2"/>
</dbReference>
<dbReference type="Gene3D" id="2.40.10.10">
    <property type="entry name" value="Trypsin-like serine proteases"/>
    <property type="match status" value="2"/>
</dbReference>
<dbReference type="InterPro" id="IPR011545">
    <property type="entry name" value="DEAD/DEAH_box_helicase_dom"/>
</dbReference>
<dbReference type="InterPro" id="IPR043502">
    <property type="entry name" value="DNA/RNA_pol_sf"/>
</dbReference>
<dbReference type="InterPro" id="IPR001456">
    <property type="entry name" value="HC-pro"/>
</dbReference>
<dbReference type="InterPro" id="IPR031159">
    <property type="entry name" value="HC_PRO_CPD_dom"/>
</dbReference>
<dbReference type="InterPro" id="IPR042308">
    <property type="entry name" value="HC_PRO_CPD_sf"/>
</dbReference>
<dbReference type="InterPro" id="IPR014001">
    <property type="entry name" value="Helicase_ATP-bd"/>
</dbReference>
<dbReference type="InterPro" id="IPR001650">
    <property type="entry name" value="Helicase_C-like"/>
</dbReference>
<dbReference type="InterPro" id="IPR027417">
    <property type="entry name" value="P-loop_NTPase"/>
</dbReference>
<dbReference type="InterPro" id="IPR002540">
    <property type="entry name" value="Pept_S30_P1_potyvir"/>
</dbReference>
<dbReference type="InterPro" id="IPR009003">
    <property type="entry name" value="Peptidase_S1_PA"/>
</dbReference>
<dbReference type="InterPro" id="IPR043504">
    <property type="entry name" value="Peptidase_S1_PA_chymotrypsin"/>
</dbReference>
<dbReference type="InterPro" id="IPR001592">
    <property type="entry name" value="Poty_coat"/>
</dbReference>
<dbReference type="InterPro" id="IPR001730">
    <property type="entry name" value="Potyv_NIa-pro_dom"/>
</dbReference>
<dbReference type="InterPro" id="IPR039560">
    <property type="entry name" value="Potyvirid-P3"/>
</dbReference>
<dbReference type="InterPro" id="IPR013648">
    <property type="entry name" value="PP_Potyviridae"/>
</dbReference>
<dbReference type="InterPro" id="IPR043128">
    <property type="entry name" value="Rev_trsase/Diguanyl_cyclase"/>
</dbReference>
<dbReference type="InterPro" id="IPR001205">
    <property type="entry name" value="RNA-dir_pol_C"/>
</dbReference>
<dbReference type="InterPro" id="IPR007094">
    <property type="entry name" value="RNA-dir_pol_PSvirus"/>
</dbReference>
<dbReference type="PANTHER" id="PTHR43519">
    <property type="entry name" value="ATP-DEPENDENT RNA HELICASE HRPB"/>
    <property type="match status" value="1"/>
</dbReference>
<dbReference type="PANTHER" id="PTHR43519:SF1">
    <property type="entry name" value="ATP-DEPENDENT RNA HELICASE HRPB"/>
    <property type="match status" value="1"/>
</dbReference>
<dbReference type="Pfam" id="PF00270">
    <property type="entry name" value="DEAD"/>
    <property type="match status" value="1"/>
</dbReference>
<dbReference type="Pfam" id="PF00271">
    <property type="entry name" value="Helicase_C"/>
    <property type="match status" value="1"/>
</dbReference>
<dbReference type="Pfam" id="PF00863">
    <property type="entry name" value="Peptidase_C4"/>
    <property type="match status" value="1"/>
</dbReference>
<dbReference type="Pfam" id="PF00851">
    <property type="entry name" value="Peptidase_C6"/>
    <property type="match status" value="1"/>
</dbReference>
<dbReference type="Pfam" id="PF01577">
    <property type="entry name" value="Peptidase_S30"/>
    <property type="match status" value="1"/>
</dbReference>
<dbReference type="Pfam" id="PF00767">
    <property type="entry name" value="Poty_coat"/>
    <property type="match status" value="1"/>
</dbReference>
<dbReference type="Pfam" id="PF08440">
    <property type="entry name" value="Poty_PP"/>
    <property type="match status" value="1"/>
</dbReference>
<dbReference type="Pfam" id="PF13608">
    <property type="entry name" value="Potyvirid-P3"/>
    <property type="match status" value="1"/>
</dbReference>
<dbReference type="Pfam" id="PF00680">
    <property type="entry name" value="RdRP_1"/>
    <property type="match status" value="1"/>
</dbReference>
<dbReference type="PRINTS" id="PR00966">
    <property type="entry name" value="NIAPOTYPTASE"/>
</dbReference>
<dbReference type="SMART" id="SM00487">
    <property type="entry name" value="DEXDc"/>
    <property type="match status" value="1"/>
</dbReference>
<dbReference type="SMART" id="SM00490">
    <property type="entry name" value="HELICc"/>
    <property type="match status" value="1"/>
</dbReference>
<dbReference type="SUPFAM" id="SSF56672">
    <property type="entry name" value="DNA/RNA polymerases"/>
    <property type="match status" value="1"/>
</dbReference>
<dbReference type="SUPFAM" id="SSF52540">
    <property type="entry name" value="P-loop containing nucleoside triphosphate hydrolases"/>
    <property type="match status" value="2"/>
</dbReference>
<dbReference type="SUPFAM" id="SSF50494">
    <property type="entry name" value="Trypsin-like serine proteases"/>
    <property type="match status" value="1"/>
</dbReference>
<dbReference type="PROSITE" id="PS51744">
    <property type="entry name" value="HC_PRO_CPD"/>
    <property type="match status" value="1"/>
</dbReference>
<dbReference type="PROSITE" id="PS51192">
    <property type="entry name" value="HELICASE_ATP_BIND_1"/>
    <property type="match status" value="1"/>
</dbReference>
<dbReference type="PROSITE" id="PS51194">
    <property type="entry name" value="HELICASE_CTER"/>
    <property type="match status" value="1"/>
</dbReference>
<dbReference type="PROSITE" id="PS51436">
    <property type="entry name" value="POTYVIRUS_NIA_PRO"/>
    <property type="match status" value="1"/>
</dbReference>
<dbReference type="PROSITE" id="PS51871">
    <property type="entry name" value="PV_P1_PRO"/>
    <property type="match status" value="1"/>
</dbReference>
<dbReference type="PROSITE" id="PS50507">
    <property type="entry name" value="RDRP_SSRNA_POS"/>
    <property type="match status" value="1"/>
</dbReference>
<name>POLG_ZYMVS</name>
<keyword id="KW-0067">ATP-binding</keyword>
<keyword id="KW-0167">Capsid protein</keyword>
<keyword id="KW-0191">Covalent protein-RNA linkage</keyword>
<keyword id="KW-1139">Helical capsid protein</keyword>
<keyword id="KW-0347">Helicase</keyword>
<keyword id="KW-1036">Host cytoplasmic vesicle</keyword>
<keyword id="KW-1048">Host nucleus</keyword>
<keyword id="KW-0945">Host-virus interaction</keyword>
<keyword id="KW-0378">Hydrolase</keyword>
<keyword id="KW-1090">Inhibition of host innate immune response by virus</keyword>
<keyword id="KW-0547">Nucleotide-binding</keyword>
<keyword id="KW-0548">Nucleotidyltransferase</keyword>
<keyword id="KW-0597">Phosphoprotein</keyword>
<keyword id="KW-0645">Protease</keyword>
<keyword id="KW-0688">Ribosomal frameshifting</keyword>
<keyword id="KW-0696">RNA-directed RNA polymerase</keyword>
<keyword id="KW-0941">Suppressor of RNA silencing</keyword>
<keyword id="KW-0788">Thiol protease</keyword>
<keyword id="KW-0808">Transferase</keyword>
<keyword id="KW-0899">Viral immunoevasion</keyword>
<keyword id="KW-0693">Viral RNA replication</keyword>
<keyword id="KW-0946">Virion</keyword>
<proteinExistence type="inferred from homology"/>
<organism>
    <name type="scientific">Zucchini yellow mosaic virus (strain Singapore)</name>
    <name type="common">ZYMV</name>
    <dbReference type="NCBI Taxonomy" id="117130"/>
    <lineage>
        <taxon>Viruses</taxon>
        <taxon>Riboviria</taxon>
        <taxon>Orthornavirae</taxon>
        <taxon>Pisuviricota</taxon>
        <taxon>Stelpaviricetes</taxon>
        <taxon>Patatavirales</taxon>
        <taxon>Potyviridae</taxon>
        <taxon>Potyvirus</taxon>
        <taxon>Potyvirus cucurbitaflavitesselati</taxon>
        <taxon>Zucchini yellow mosaic virus</taxon>
    </lineage>
</organism>
<evidence type="ECO:0000250" key="1"/>
<evidence type="ECO:0000250" key="2">
    <source>
        <dbReference type="UniProtKB" id="P04517"/>
    </source>
</evidence>
<evidence type="ECO:0000250" key="3">
    <source>
        <dbReference type="UniProtKB" id="P09814"/>
    </source>
</evidence>
<evidence type="ECO:0000250" key="4">
    <source>
        <dbReference type="UniProtKB" id="P13529"/>
    </source>
</evidence>
<evidence type="ECO:0000250" key="5">
    <source>
        <dbReference type="UniProtKB" id="P17767"/>
    </source>
</evidence>
<evidence type="ECO:0000250" key="6">
    <source>
        <dbReference type="UniProtKB" id="P18247"/>
    </source>
</evidence>
<evidence type="ECO:0000250" key="7">
    <source>
        <dbReference type="UniProtKB" id="P21231"/>
    </source>
</evidence>
<evidence type="ECO:0000250" key="8">
    <source>
        <dbReference type="UniProtKB" id="P89509"/>
    </source>
</evidence>
<evidence type="ECO:0000255" key="9"/>
<evidence type="ECO:0000255" key="10">
    <source>
        <dbReference type="PROSITE-ProRule" id="PRU00539"/>
    </source>
</evidence>
<evidence type="ECO:0000255" key="11">
    <source>
        <dbReference type="PROSITE-ProRule" id="PRU00541"/>
    </source>
</evidence>
<evidence type="ECO:0000255" key="12">
    <source>
        <dbReference type="PROSITE-ProRule" id="PRU00542"/>
    </source>
</evidence>
<evidence type="ECO:0000255" key="13">
    <source>
        <dbReference type="PROSITE-ProRule" id="PRU00766"/>
    </source>
</evidence>
<evidence type="ECO:0000255" key="14">
    <source>
        <dbReference type="PROSITE-ProRule" id="PRU01080"/>
    </source>
</evidence>
<evidence type="ECO:0000255" key="15">
    <source>
        <dbReference type="PROSITE-ProRule" id="PRU01219"/>
    </source>
</evidence>
<evidence type="ECO:0000256" key="16">
    <source>
        <dbReference type="SAM" id="MobiDB-lite"/>
    </source>
</evidence>
<evidence type="ECO:0000305" key="17"/>
<reference key="1">
    <citation type="submission" date="2001-05" db="EMBL/GenBank/DDBJ databases">
        <authorList>
            <person name="Lee K.C."/>
            <person name="Wong S.M."/>
        </authorList>
    </citation>
    <scope>NUCLEOTIDE SEQUENCE [GENOMIC RNA]</scope>
</reference>
<reference key="2">
    <citation type="journal article" date="2001" name="Virus Res.">
        <title>Potyvirus proteins: a wealth of functions.</title>
        <authorList>
            <person name="Urcuqui-Inchima S."/>
            <person name="Haenni A.L."/>
            <person name="Bernardi F."/>
        </authorList>
    </citation>
    <scope>REVIEW</scope>
</reference>
<comment type="function">
    <molecule>Helper component proteinase</molecule>
    <text evidence="2">Required for aphid transmission and also has proteolytic activity. Only cleaves a Gly-Gly dipeptide at its own C-terminus. Interacts with virions and aphid stylets. Acts as a suppressor of RNA-mediated gene silencing, also known as post-transcriptional gene silencing (PTGS), a mechanism of plant viral defense that limits the accumulation of viral RNAs. May have RNA-binding activity.</text>
</comment>
<comment type="function">
    <molecule>Cytoplasmic inclusion protein</molecule>
    <text>Has helicase activity. It may be involved in replication.</text>
</comment>
<comment type="function">
    <molecule>6 kDa protein 1</molecule>
    <text evidence="4 8">Indispensable for virus replication (By similarity). Reduces the abundance of host transcripts related to jasmonic acid biosynthesis therefore altering the host defenses (By similarity). In order to increase its own stability, decreases host protein degradation pathways (By similarity).</text>
</comment>
<comment type="function">
    <molecule>6 kDa protein 2</molecule>
    <text evidence="3">Indispensable for virus replication.</text>
</comment>
<comment type="function">
    <molecule>Viral genome-linked protein</molecule>
    <text evidence="6">Mediates the cap-independent, EIF4E-dependent translation of viral genomic RNAs (By similarity). Binds to the cap-binding site of host EIF4E and thus interferes with the host EIF4E-dependent mRNA export and translation (By similarity). VPg-RNA directly binds EIF4E and is a template for transcription (By similarity). Also forms trimeric complexes with EIF4E-EIF4G, which are templates for translation (By similarity).</text>
</comment>
<comment type="function">
    <molecule>Nuclear inclusion protein A</molecule>
    <text evidence="2">Has RNA-binding and proteolytic activities.</text>
</comment>
<comment type="function">
    <molecule>Nuclear inclusion protein B</molecule>
    <text>An RNA-dependent RNA polymerase that plays an essential role in the virus replication.</text>
</comment>
<comment type="function">
    <molecule>Capsid protein</molecule>
    <text evidence="2">Involved in aphid transmission, cell-to-cell and systemis movement, encapsidation of the viral RNA and in the regulation of viral RNA amplification.</text>
</comment>
<comment type="catalytic activity">
    <molecule>Nuclear inclusion protein B</molecule>
    <reaction evidence="10">
        <text>RNA(n) + a ribonucleoside 5'-triphosphate = RNA(n+1) + diphosphate</text>
        <dbReference type="Rhea" id="RHEA:21248"/>
        <dbReference type="Rhea" id="RHEA-COMP:14527"/>
        <dbReference type="Rhea" id="RHEA-COMP:17342"/>
        <dbReference type="ChEBI" id="CHEBI:33019"/>
        <dbReference type="ChEBI" id="CHEBI:61557"/>
        <dbReference type="ChEBI" id="CHEBI:140395"/>
        <dbReference type="EC" id="2.7.7.48"/>
    </reaction>
</comment>
<comment type="catalytic activity">
    <molecule>Nuclear inclusion protein A</molecule>
    <reaction evidence="2">
        <text>Hydrolyzes glutaminyl bonds, and activity is further restricted by preferences for the amino acids in P6 - P1' that vary with the species of potyvirus, e.g. Glu-Xaa-Xaa-Tyr-Xaa-Gln-|-(Ser or Gly) for the enzyme from tobacco etch virus. The natural substrate is the viral polyprotein, but other proteins and oligopeptides containing the appropriate consensus sequence are also cleaved.</text>
        <dbReference type="EC" id="3.4.22.44"/>
    </reaction>
</comment>
<comment type="catalytic activity">
    <molecule>Helper component proteinase</molecule>
    <reaction evidence="2">
        <text>Hydrolyzes a Gly-|-Gly bond at its own C-terminus, commonly in the sequence -Tyr-Xaa-Val-Gly-|-Gly, in the processing of the potyviral polyprotein.</text>
        <dbReference type="EC" id="3.4.22.45"/>
    </reaction>
</comment>
<comment type="subunit">
    <molecule>Viral genome-linked protein</molecule>
    <text evidence="6">Interacts with host eIF4E protein (via cap-binding region); this interaction mediates the translation of the VPg-viral RNA conjugates (By similarity). Part of a complex that comprises VPg, RNA, host EIF4E and EIF4G; this interaction mediates the translation of the VPg-viral RNA conjugates (By similarity).</text>
</comment>
<comment type="subcellular location">
    <molecule>6 kDa protein 1</molecule>
    <subcellularLocation>
        <location>Host cytoplasmic vesicle</location>
    </subcellularLocation>
    <text evidence="4">Probably colocalizes with 6K2-induced vesicles associated with host chloroplasts.</text>
</comment>
<comment type="subcellular location">
    <molecule>6 kDa protein 2</molecule>
    <subcellularLocation>
        <location evidence="3">Host cytoplasmic vesicle</location>
    </subcellularLocation>
    <text evidence="3">6K-induced vesicles associate with host chloroplasts.</text>
</comment>
<comment type="subcellular location">
    <molecule>Viral genome-linked protein</molecule>
    <subcellularLocation>
        <location evidence="7">Host nucleus</location>
    </subcellularLocation>
    <text evidence="7">Binds to host plant eIF4E proteins in the host nucleus.</text>
</comment>
<comment type="subcellular location">
    <molecule>Capsid protein</molecule>
    <subcellularLocation>
        <location evidence="17">Virion</location>
    </subcellularLocation>
</comment>
<comment type="alternative products">
    <event type="ribosomal frameshifting"/>
    <isoform>
        <id>O36979-1</id>
        <name>Genome polyprotein</name>
        <sequence type="displayed"/>
    </isoform>
    <isoform>
        <id>P0CK15-1</id>
        <name>P3N-PIPO polyprotein</name>
        <sequence type="external"/>
    </isoform>
</comment>
<comment type="domain">
    <molecule>Helper component proteinase</molecule>
    <text>The N-terminus is involved in interaction with stylets. The central part is involved in interaction with virions and the C-terminus is involved in cell-to cell movement of the virus.</text>
</comment>
<comment type="PTM">
    <molecule>Viral genome-linked protein</molecule>
    <text evidence="3">VPg is uridylylated by the polymerase and is covalently attached to the 5'-end of the genomic RNA. This uridylylated form acts as a nucleotide-peptide primer for the polymerase (By similarity).</text>
</comment>
<comment type="PTM">
    <molecule>Genome polyprotein</molecule>
    <text evidence="1">Potyviral RNA is expressed as two polyproteins which undergo post-translational proteolytic processing. Genome polyprotein is processed by NIa-pro, P1 and HC-pro proteinases resulting in the production of at least ten individual proteins. P3N-PIPO polyprotein is cleaved by P1 and HC-pro proteinases resulting in the production of three individual proteins. The P1 proteinase and the HC-pro cleave only their respective C-termini autocatalytically. 6K1 is essential for proper proteolytic separation of P3 from CI (By similarity).</text>
</comment>
<comment type="miscellaneous">
    <molecule>Isoform Genome polyprotein</molecule>
    <text>Produced by conventional translation.</text>
</comment>
<comment type="similarity">
    <text evidence="17">Belongs to the potyviridae genome polyprotein family.</text>
</comment>
<protein>
    <recommendedName>
        <fullName>Genome polyprotein</fullName>
    </recommendedName>
    <component>
        <recommendedName>
            <fullName>P1 protease</fullName>
            <ecNumber>3.4.21.-</ecNumber>
        </recommendedName>
        <alternativeName>
            <fullName>Leader protease P1</fullName>
        </alternativeName>
        <alternativeName>
            <fullName>N-terminal protein</fullName>
        </alternativeName>
        <alternativeName>
            <fullName>P1 proteinase</fullName>
        </alternativeName>
    </component>
    <component>
        <recommendedName>
            <fullName>Helper component proteinase</fullName>
            <shortName>HC-pro</shortName>
            <ecNumber evidence="2">3.4.22.45</ecNumber>
        </recommendedName>
    </component>
    <component>
        <recommendedName>
            <fullName>Protein P3</fullName>
        </recommendedName>
    </component>
    <component>
        <recommendedName>
            <fullName>6 kDa protein 1</fullName>
            <shortName>6K1</shortName>
        </recommendedName>
    </component>
    <component>
        <recommendedName>
            <fullName>Cytoplasmic inclusion protein</fullName>
            <shortName>CI</shortName>
            <ecNumber>3.6.4.-</ecNumber>
        </recommendedName>
    </component>
    <component>
        <recommendedName>
            <fullName>6 kDa protein 2</fullName>
            <shortName>6K2</shortName>
        </recommendedName>
    </component>
    <component>
        <recommendedName>
            <fullName>Viral genome-linked protein</fullName>
        </recommendedName>
        <alternativeName>
            <fullName>VPg</fullName>
        </alternativeName>
    </component>
    <component>
        <recommendedName>
            <fullName>Nuclear inclusion protein A</fullName>
            <shortName>NI-a</shortName>
            <shortName>NIa</shortName>
            <ecNumber>3.4.22.44</ecNumber>
        </recommendedName>
        <alternativeName>
            <fullName>49 kDa proteinase</fullName>
            <shortName>49 kDa-Pro</shortName>
        </alternativeName>
        <alternativeName>
            <fullName>NIa-pro</fullName>
        </alternativeName>
    </component>
    <component>
        <recommendedName>
            <fullName>Nuclear inclusion protein B</fullName>
            <shortName>NI-b</shortName>
            <shortName>NIb</shortName>
            <ecNumber>2.7.7.48</ecNumber>
        </recommendedName>
        <alternativeName>
            <fullName>RNA-directed RNA polymerase</fullName>
        </alternativeName>
    </component>
    <component>
        <recommendedName>
            <fullName>Capsid protein</fullName>
            <shortName>CP</shortName>
        </recommendedName>
        <alternativeName>
            <fullName>Coat protein</fullName>
        </alternativeName>
    </component>
</protein>
<organismHost>
    <name type="scientific">Citrullus lanatus</name>
    <name type="common">Watermelon</name>
    <name type="synonym">Citrullus vulgaris</name>
    <dbReference type="NCBI Taxonomy" id="3654"/>
</organismHost>
<organismHost>
    <name type="scientific">Cucumis melo</name>
    <name type="common">Muskmelon</name>
    <dbReference type="NCBI Taxonomy" id="3656"/>
</organismHost>
<organismHost>
    <name type="scientific">Cucumis sativus</name>
    <name type="common">Cucumber</name>
    <dbReference type="NCBI Taxonomy" id="3659"/>
</organismHost>
<organismHost>
    <name type="scientific">Cucurbita pepo</name>
    <name type="common">Vegetable marrow</name>
    <name type="synonym">Summer squash</name>
    <dbReference type="NCBI Taxonomy" id="3663"/>
</organismHost>
<feature type="chain" id="PRO_0000420037" description="Genome polyprotein">
    <location>
        <begin position="1"/>
        <end position="3083"/>
    </location>
</feature>
<feature type="chain" id="PRO_0000040520" description="P1 protease" evidence="9">
    <location>
        <begin position="1"/>
        <end position="313"/>
    </location>
</feature>
<feature type="chain" id="PRO_0000040521" description="Helper component proteinase" evidence="9">
    <location>
        <begin position="314"/>
        <end position="769"/>
    </location>
</feature>
<feature type="chain" id="PRO_0000040522" description="Protein P3" evidence="1">
    <location>
        <begin position="770"/>
        <end position="1115"/>
    </location>
</feature>
<feature type="chain" id="PRO_0000040523" description="6 kDa protein 1" evidence="1">
    <location>
        <begin position="1116"/>
        <end position="1167"/>
    </location>
</feature>
<feature type="chain" id="PRO_0000040524" description="Cytoplasmic inclusion protein" evidence="1">
    <location>
        <begin position="1168"/>
        <end position="1801"/>
    </location>
</feature>
<feature type="chain" id="PRO_0000040525" description="6 kDa protein 2" evidence="1">
    <location>
        <begin position="1802"/>
        <end position="1854"/>
    </location>
</feature>
<feature type="chain" id="PRO_0000040526" description="Viral genome-linked protein" evidence="1">
    <location>
        <begin position="1855"/>
        <end position="2044"/>
    </location>
</feature>
<feature type="chain" id="PRO_0000040527" description="Nuclear inclusion protein A" evidence="1">
    <location>
        <begin position="2045"/>
        <end position="2287"/>
    </location>
</feature>
<feature type="chain" id="PRO_0000040528" description="Nuclear inclusion protein B" evidence="1">
    <location>
        <begin position="2288"/>
        <end position="2804"/>
    </location>
</feature>
<feature type="chain" id="PRO_0000040529" description="Capsid protein" evidence="1">
    <location>
        <begin position="2805"/>
        <end position="3083"/>
    </location>
</feature>
<feature type="domain" description="Peptidase S30" evidence="15">
    <location>
        <begin position="173"/>
        <end position="313"/>
    </location>
</feature>
<feature type="domain" description="Peptidase C6" evidence="14">
    <location>
        <begin position="647"/>
        <end position="769"/>
    </location>
</feature>
<feature type="domain" description="Helicase ATP-binding" evidence="11">
    <location>
        <begin position="1239"/>
        <end position="1391"/>
    </location>
</feature>
<feature type="domain" description="Helicase C-terminal" evidence="12">
    <location>
        <begin position="1410"/>
        <end position="1569"/>
    </location>
</feature>
<feature type="domain" description="Peptidase C4" evidence="13">
    <location>
        <begin position="2045"/>
        <end position="2263"/>
    </location>
</feature>
<feature type="domain" description="RdRp catalytic" evidence="10">
    <location>
        <begin position="2529"/>
        <end position="2653"/>
    </location>
</feature>
<feature type="region of interest" description="Disordered" evidence="16">
    <location>
        <begin position="2808"/>
        <end position="2855"/>
    </location>
</feature>
<feature type="short sequence motif" description="Involved in interaction with stylet and aphid transmission" evidence="1">
    <location>
        <begin position="365"/>
        <end position="368"/>
    </location>
</feature>
<feature type="short sequence motif" description="Involved in virions binding and aphid transmission" evidence="1">
    <location>
        <begin position="621"/>
        <end position="623"/>
    </location>
</feature>
<feature type="short sequence motif" description="DECH box">
    <location>
        <begin position="1341"/>
        <end position="1344"/>
    </location>
</feature>
<feature type="short sequence motif" description="Nuclear localization signal" evidence="9">
    <location>
        <begin position="1894"/>
        <end position="1903"/>
    </location>
</feature>
<feature type="compositionally biased region" description="Basic and acidic residues" evidence="16">
    <location>
        <begin position="2817"/>
        <end position="2831"/>
    </location>
</feature>
<feature type="compositionally biased region" description="Low complexity" evidence="16">
    <location>
        <begin position="2832"/>
        <end position="2844"/>
    </location>
</feature>
<feature type="active site" description="For P1 proteinase activity" evidence="1">
    <location>
        <position position="267"/>
    </location>
</feature>
<feature type="active site" description="For helper component proteinase activity" evidence="14">
    <location>
        <position position="655"/>
    </location>
</feature>
<feature type="active site" description="For helper component proteinase activity" evidence="14">
    <location>
        <position position="728"/>
    </location>
</feature>
<feature type="active site" description="For nuclear inclusion protein A activity" evidence="13">
    <location>
        <position position="2090"/>
    </location>
</feature>
<feature type="active site" description="For nuclear inclusion protein A activity" evidence="13">
    <location>
        <position position="2125"/>
    </location>
</feature>
<feature type="active site" description="For nuclear inclusion protein A activity" evidence="13">
    <location>
        <position position="2195"/>
    </location>
</feature>
<feature type="binding site" evidence="11">
    <location>
        <begin position="1252"/>
        <end position="1259"/>
    </location>
    <ligand>
        <name>ATP</name>
        <dbReference type="ChEBI" id="CHEBI:30616"/>
    </ligand>
</feature>
<feature type="site" description="Cleavage; by P1 proteinase" evidence="9">
    <location>
        <begin position="313"/>
        <end position="314"/>
    </location>
</feature>
<feature type="site" description="Cleavage; by autolysis" evidence="14">
    <location>
        <begin position="769"/>
        <end position="770"/>
    </location>
</feature>
<feature type="site" description="Cleavage; by NIa-pro" evidence="6">
    <location>
        <begin position="1115"/>
        <end position="1116"/>
    </location>
</feature>
<feature type="site" description="Cleavage; by NIa-pro" evidence="6">
    <location>
        <begin position="1167"/>
        <end position="1168"/>
    </location>
</feature>
<feature type="site" description="Cleavage; by NIa-pro" evidence="6">
    <location>
        <begin position="1801"/>
        <end position="1802"/>
    </location>
</feature>
<feature type="site" description="Cleavage; by NIa-pro" evidence="6">
    <location>
        <begin position="1854"/>
        <end position="1855"/>
    </location>
</feature>
<feature type="site" description="Cleavage; by NIa-pro" evidence="6">
    <location>
        <begin position="2044"/>
        <end position="2045"/>
    </location>
</feature>
<feature type="site" description="Cleavage; by NIa-pro" evidence="6">
    <location>
        <begin position="2287"/>
        <end position="2288"/>
    </location>
</feature>
<feature type="site" description="Cleavage; by NIa-pro" evidence="6">
    <location>
        <begin position="2804"/>
        <end position="2805"/>
    </location>
</feature>
<feature type="modified residue" description="O-(5'-phospho-RNA)-tyrosine" evidence="3">
    <location>
        <position position="1918"/>
    </location>
</feature>
<feature type="modified residue" description="Phosphothreonine" evidence="5">
    <location>
        <position position="3065"/>
    </location>
</feature>
<sequence length="3083" mass="351033">MAAIMIGSISVPIIGSAQCATAPIGNRVNIVAPGHMAICKPQMRSHAYYKHASQKLSEQSSRGIEVLNSFFNNDPEDAFRLTRNGMSKVKKGPNGRIILRKPKARHVFERINLEKSEKEQKGKFFNGEYDTTVTSIKGVTTSKENDLGAFSLRSPFYKRTCKKEKRRITRENIVCVDDVNNLCERILKITRDKNIPVEIIGKRRNHHTLTFKKFKGSFVGKVSLAPERSQMKHVEMSYGQFDYILQAICRITSTKHVRDEDIKPGCSGWVFSTDHALTQKYSRLPYLVIRGRDDDGIVNALEPVLFYSDVEHYSFQNEVQFFNGWRKMFDKLKPHSDHTCKVDHNNEECGEMAAVLSQAIFPVLKLSCQVCREKLSRVSFEEFKDFLSRNFMTHESEWSTLRDGVHCDNVLKLIKGAVQTTQNLKLSSDIMKLVQNHTSTHMKQIQDINKALMKGSLVTQDELDLALKQLLEMTQWFKNHMHLTGEEALKTFRNKRSNKAMINPSLLCDNQLDKNGNFIWGERGYHSKRLFKNFFEEVIPSEGYTKYIVRNFPNGTRKLAIGSLIVPLNLDRARTALLGESIEKEPLTSACISQQNENYIHSCCCVTMDDGTPMYSELKSPTKRHLVIGASGDPKYIDLPASEAERMYIAKEGYCYLNIFLAMLVNVNENEAKDFTKMIRDVLIPMLGQWPSLMDVATAAYILGVFHPETRCAELPRILVDHATQTMHVIDSYGSLTVGYHVLKAGTVNHLIQFASNDLQSEMKHYRVGGTPTQRIRLEEQLIKGIFKPKIMMQLLHDDPYILLLGMISPTILVHMYRMRHFERGIEIWIKRDHEIGKIFVILEQLTRKVALAEILVDQLDLISEASPHLLEIMNGCQDNQRAYAPALDLLTIQVEREFSNKELKTNGYPDLHQTLHDMREKMYAKQLHNSWQELSLLEKSCVTVRLKQFSIFTERNLTQRAKERKHASSLQFVHECFITTRVHAKSIRDAGVRKLNEALVGTCKFFFSCGFRIFARCYSDIIYFVNVCLVFSLVLQMSNTVRNMIAATREEKERAMANKADENERTLMHMYHIFCKKQDDAPIYNDFLEHVRSVRPDLEETLLYMAGGEVVTAQAKSAVQIQFEKIIAVLALLTMCFDAERSDAIFKILTKLKIVFGTVGETVRLQGLEDIENLEDDKRLTIDFDINTNEAQSSTTFDVHFEDWWNRQLQQNRTVPHYRTTGKFLEFTRSTAAYVANEIASSSEGEFLVRGAVGSGKSTSLPAHLAKKGKVLLLEPTRPLAENVSRQLAGDPFFQNVTLRMRGLSCFGSSNITVMTSGFAFHYYVNNPHQLMEFDFVIIDECHVTDSATIAFNCALKEYSFAGKLIKVSATPPGRECDFDTQFAVKVKTEDHLSFNAFVGAQKTGSNADMVQHGNNILVYVASYNEVDMLSKLLTERQFSVTKVDGRTMQLGKTTIETHGTSQKPHFIVATNIIENGVTLDVECVVDFGLKVVAELDSEKRCVRYSKKPVSYGERIQRLGRVGRSKPGTALRIGHTEKGIENIPEFIATEAAALSFAYGLSVTTHGVSTNNLGKCTVKQMKCALNFELTPFFTTHLIRHDGSMHPLIHEELKQFKLRDSEMVLNKVALPHQFVSQWMDQSEYERIGVHIQCHESTRIPFYTNGIPDKVYERIWKCIQENKNDALFGKLSSAFPSKVSYTLSTDPAALPRTIAIIDHLLAEEMMKRNHFDMISSAVTGYSFSLAGIADSFRKRYMRDHTAHHIAILQQARAQLLEFNSKNVNINNLSDLEGIGVIKSVVLQSKQEVSSFLGLRGKWDGRKFANDVILAVMTLFGGGWFMWEYFTKKVNEPVRVESKKRRSQKLKFRDAYDRKVGREIFGDNDTIGRTFGEAYTKRGKVKGNNSTKGMGRKTRNFVHLYGVEPEIYSFIRFVDPLTGHTLDESTHTDISLVQEEFGNIREKFLENDLISRQSIINKPGIQAYFMGKGTEEALKVDLTPHVPLLLCRNTNAIAGYPERENELRQTGTPIKVSFKEVPEKNEHVELESKSIYKGVRDYNGISTIVCQLTNDSDGLKETMYGIGYGPIIITNGHLFRKNNGTLLVRSWHGEFTVKNTTTLKVHFIEGKDVVLVRMPKDFPPFRSNASFRAPKREERACLVGTNFQEKSLRSTVSESSMTIPEGTGSYWIHWISTNEGDCGLPMVSTTDGKIIGIHGLASTVSSKNYFVPFTDDLLTTHLSKLDDLTWTQHWLWQPSKIAWGSLNLVDEQPGPEFRISNLVKDLLTSGVETQSKRERWVYESCEGNLRAVGSAQSALVTKHVVKGKCPFFEEYLQTHAEANTYFRPLMGEYQPSKLNKEAFKKDFFKYNKPVVVNQLDHDKFLGAVNGVIRMMCDFEFNECRFITDPEEIYDSLNMKAAIGAQYRGKKKEYFEGLDNFDRERLLFQSCERLFNGHKGLWNGSLKAELRPLEKVQANKTRTFTAAPIDTLLGAKVCVDDFNNEFYSKNLKCPWTVGMTKFYGGWDKLMRELPDGWLYCHADGSQFDSSLTPALLNAVLIIRSFYMEDWWVGQEMLENLYAEIVYTPILAPDGTIFKKFRGNNSGQPSTVVDNTLMVVISIYYACMKFGWSYEEIENKLVFFANGDDLILAVKDEDSGLLDNMSASFSELGLNYDFSERTHKREDLWFMSHQAMLVDGMYIPKLEKERIVSILEWDRSKEIMHRTEAICAAMIEAWGHTDLLREIRKFYLWFVEKEEVRELATLGKAPYIAETALRKLYTDKGAETGELARYLQALHQDIFFEQGDTVMLQSDTQTREAGAGASKKDKDEDKDKKKDVASSSASEKAVATATKDKDVNAGSHGKIVPRLSKITKKMSLPRVKGSVILDIDHLLEYKPDQIELYNTRASHQQFASWFNQVKAEYDLNEQQMGVVMNGFMVWCIENGTSPDINGVWVMMDGNEQVEYPLKPIVENAKPTLRQIMHHFSDAAEAYIEMRNAEAPYMPRYGLLRNLRDRSLARYAFDFYEVNSKTPDRAREAVAQMKAAALSNVSSRLFGLDGNVATTSEDTERHTARDVNRNMHTLLGVNTMQ</sequence>